<keyword id="KW-1015">Disulfide bond</keyword>
<keyword id="KW-0382">Hypotensive agent</keyword>
<keyword id="KW-0481">Metalloenzyme inhibitor</keyword>
<keyword id="KW-0483">Metalloprotease inhibitor</keyword>
<keyword id="KW-0646">Protease inhibitor</keyword>
<keyword id="KW-1185">Reference proteome</keyword>
<keyword id="KW-0964">Secreted</keyword>
<keyword id="KW-0800">Toxin</keyword>
<keyword id="KW-0838">Vasoactive</keyword>
<keyword id="KW-0840">Vasodilator</keyword>
<protein>
    <recommendedName>
        <fullName evidence="6">Natriuretic peptide PtNP-a</fullName>
    </recommendedName>
</protein>
<feature type="peptide" id="PRO_5000140402" description="Natriuretic peptide PtNP-a" evidence="2">
    <location>
        <begin position="1" status="less than"/>
        <end position="40"/>
    </location>
</feature>
<feature type="region of interest" description="Disordered" evidence="4">
    <location>
        <begin position="17"/>
        <end position="40"/>
    </location>
</feature>
<feature type="compositionally biased region" description="Polar residues" evidence="4">
    <location>
        <begin position="17"/>
        <end position="34"/>
    </location>
</feature>
<feature type="disulfide bond" evidence="2">
    <location>
        <begin position="9"/>
        <end position="25"/>
    </location>
</feature>
<feature type="non-terminal residue">
    <location>
        <position position="1"/>
    </location>
</feature>
<evidence type="ECO:0000250" key="1">
    <source>
        <dbReference type="UniProtKB" id="C6EVG7"/>
    </source>
</evidence>
<evidence type="ECO:0000250" key="2">
    <source>
        <dbReference type="UniProtKB" id="P83231"/>
    </source>
</evidence>
<evidence type="ECO:0000250" key="3">
    <source>
        <dbReference type="UniProtKB" id="Q3SAE9"/>
    </source>
</evidence>
<evidence type="ECO:0000256" key="4">
    <source>
        <dbReference type="SAM" id="MobiDB-lite"/>
    </source>
</evidence>
<evidence type="ECO:0000269" key="5">
    <source>
    </source>
</evidence>
<evidence type="ECO:0000303" key="6">
    <source>
    </source>
</evidence>
<evidence type="ECO:0000305" key="7"/>
<evidence type="ECO:0000305" key="8">
    <source>
    </source>
</evidence>
<organism>
    <name type="scientific">Pseudonaja textilis</name>
    <name type="common">Eastern brown snake</name>
    <dbReference type="NCBI Taxonomy" id="8673"/>
    <lineage>
        <taxon>Eukaryota</taxon>
        <taxon>Metazoa</taxon>
        <taxon>Chordata</taxon>
        <taxon>Craniata</taxon>
        <taxon>Vertebrata</taxon>
        <taxon>Euteleostomi</taxon>
        <taxon>Lepidosauria</taxon>
        <taxon>Squamata</taxon>
        <taxon>Bifurcata</taxon>
        <taxon>Unidentata</taxon>
        <taxon>Episquamata</taxon>
        <taxon>Toxicofera</taxon>
        <taxon>Serpentes</taxon>
        <taxon>Colubroidea</taxon>
        <taxon>Elapidae</taxon>
        <taxon>Hydrophiinae</taxon>
        <taxon>Pseudonaja</taxon>
    </lineage>
</organism>
<reference key="1">
    <citation type="journal article" date="2006" name="Biochimie">
        <title>Cloning and characterisation of natriuretic peptides from the venom glands of Australian elapids.</title>
        <authorList>
            <person name="St Pierre L."/>
            <person name="Flight S."/>
            <person name="Masci P.P."/>
            <person name="Hanchard K.J."/>
            <person name="Lewis R.J."/>
            <person name="Alewood P.F."/>
            <person name="de Jersey J."/>
            <person name="Lavin M.F."/>
        </authorList>
    </citation>
    <scope>NUCLEOTIDE SEQUENCE [MRNA]</scope>
    <scope>FUNCTION</scope>
    <source>
        <tissue>Venom gland</tissue>
    </source>
</reference>
<proteinExistence type="evidence at transcript level"/>
<accession>Q3SAF6</accession>
<dbReference type="EMBL" id="DQ116724">
    <property type="protein sequence ID" value="AAZ82819.1"/>
    <property type="molecule type" value="mRNA"/>
</dbReference>
<dbReference type="Proteomes" id="UP000472273">
    <property type="component" value="Unplaced"/>
</dbReference>
<dbReference type="GO" id="GO:0005576">
    <property type="term" value="C:extracellular region"/>
    <property type="evidence" value="ECO:0007669"/>
    <property type="project" value="UniProtKB-SubCell"/>
</dbReference>
<dbReference type="GO" id="GO:0005179">
    <property type="term" value="F:hormone activity"/>
    <property type="evidence" value="ECO:0007669"/>
    <property type="project" value="InterPro"/>
</dbReference>
<dbReference type="GO" id="GO:0030414">
    <property type="term" value="F:peptidase inhibitor activity"/>
    <property type="evidence" value="ECO:0007669"/>
    <property type="project" value="UniProtKB-KW"/>
</dbReference>
<dbReference type="GO" id="GO:0090729">
    <property type="term" value="F:toxin activity"/>
    <property type="evidence" value="ECO:0007669"/>
    <property type="project" value="UniProtKB-KW"/>
</dbReference>
<dbReference type="GO" id="GO:0008217">
    <property type="term" value="P:regulation of blood pressure"/>
    <property type="evidence" value="ECO:0007669"/>
    <property type="project" value="UniProtKB-KW"/>
</dbReference>
<dbReference type="GO" id="GO:0042311">
    <property type="term" value="P:vasodilation"/>
    <property type="evidence" value="ECO:0007669"/>
    <property type="project" value="UniProtKB-KW"/>
</dbReference>
<dbReference type="InterPro" id="IPR000663">
    <property type="entry name" value="Natr_peptide"/>
</dbReference>
<dbReference type="InterPro" id="IPR030480">
    <property type="entry name" value="Natr_peptide_CS"/>
</dbReference>
<dbReference type="Pfam" id="PF00212">
    <property type="entry name" value="ANP"/>
    <property type="match status" value="1"/>
</dbReference>
<dbReference type="SMART" id="SM00183">
    <property type="entry name" value="NAT_PEP"/>
    <property type="match status" value="1"/>
</dbReference>
<dbReference type="PROSITE" id="PS00263">
    <property type="entry name" value="NATRIURETIC_PEPTIDE"/>
    <property type="match status" value="1"/>
</dbReference>
<comment type="function">
    <text evidence="1 3 5">Snake venom natriuretic peptide that targets NPR1 and possibly NPR2 (By similarity) (PubMed:16908092). Exhibits hypotensive and vasodepressor activities (By similarity). Recombinant PtNP-a demonstrates a dose-dependent stimulation of cGMP production via the natriuretic peptide receptor 1 (NPR1) (EC(50)=563 nM) in Madine Darby Canine Kidney (MDCK) cells (PubMed:16908092). It also inhibits the angiotensin converting enzyme (ACE) (PubMed:16908092).</text>
</comment>
<comment type="subcellular location">
    <subcellularLocation>
        <location evidence="8">Secreted</location>
    </subcellularLocation>
</comment>
<comment type="tissue specificity">
    <text evidence="8">Expressed by the venom gland.</text>
</comment>
<comment type="miscellaneous">
    <text evidence="8">Negative results: recombinant PtNP-a does not inhibit platelet aggregation.</text>
</comment>
<comment type="similarity">
    <text evidence="7">Belongs to the natriuretic peptide family.</text>
</comment>
<sequence>SGSKIGNGCFGLPLDRISNTSGMGCRNPIQNRPKSTPGGS</sequence>
<name>VNPA_PSETE</name>